<proteinExistence type="inferred from homology"/>
<gene>
    <name evidence="1" type="primary">rpsS</name>
    <name type="ordered locus">Arad_1977</name>
</gene>
<keyword id="KW-0687">Ribonucleoprotein</keyword>
<keyword id="KW-0689">Ribosomal protein</keyword>
<keyword id="KW-0694">RNA-binding</keyword>
<keyword id="KW-0699">rRNA-binding</keyword>
<evidence type="ECO:0000255" key="1">
    <source>
        <dbReference type="HAMAP-Rule" id="MF_00531"/>
    </source>
</evidence>
<evidence type="ECO:0000305" key="2"/>
<feature type="chain" id="PRO_1000146358" description="Small ribosomal subunit protein uS19">
    <location>
        <begin position="1"/>
        <end position="92"/>
    </location>
</feature>
<sequence length="92" mass="10417">MARSVWKGPFVDGYLLKKAEKVREGGRSEVIKIWSRRSTIMPQFVGLTFGVYNGSKHIPVSVNEDMVGHKFGEFAPTRTYYGHGADKKAKRK</sequence>
<reference key="1">
    <citation type="journal article" date="2009" name="J. Bacteriol.">
        <title>Genome sequences of three Agrobacterium biovars help elucidate the evolution of multichromosome genomes in bacteria.</title>
        <authorList>
            <person name="Slater S.C."/>
            <person name="Goldman B.S."/>
            <person name="Goodner B."/>
            <person name="Setubal J.C."/>
            <person name="Farrand S.K."/>
            <person name="Nester E.W."/>
            <person name="Burr T.J."/>
            <person name="Banta L."/>
            <person name="Dickerman A.W."/>
            <person name="Paulsen I."/>
            <person name="Otten L."/>
            <person name="Suen G."/>
            <person name="Welch R."/>
            <person name="Almeida N.F."/>
            <person name="Arnold F."/>
            <person name="Burton O.T."/>
            <person name="Du Z."/>
            <person name="Ewing A."/>
            <person name="Godsy E."/>
            <person name="Heisel S."/>
            <person name="Houmiel K.L."/>
            <person name="Jhaveri J."/>
            <person name="Lu J."/>
            <person name="Miller N.M."/>
            <person name="Norton S."/>
            <person name="Chen Q."/>
            <person name="Phoolcharoen W."/>
            <person name="Ohlin V."/>
            <person name="Ondrusek D."/>
            <person name="Pride N."/>
            <person name="Stricklin S.L."/>
            <person name="Sun J."/>
            <person name="Wheeler C."/>
            <person name="Wilson L."/>
            <person name="Zhu H."/>
            <person name="Wood D.W."/>
        </authorList>
    </citation>
    <scope>NUCLEOTIDE SEQUENCE [LARGE SCALE GENOMIC DNA]</scope>
    <source>
        <strain>K84 / ATCC BAA-868</strain>
    </source>
</reference>
<comment type="function">
    <text evidence="1">Protein S19 forms a complex with S13 that binds strongly to the 16S ribosomal RNA.</text>
</comment>
<comment type="similarity">
    <text evidence="1">Belongs to the universal ribosomal protein uS19 family.</text>
</comment>
<name>RS19_RHIR8</name>
<dbReference type="EMBL" id="CP000628">
    <property type="protein sequence ID" value="ACM26283.1"/>
    <property type="molecule type" value="Genomic_DNA"/>
</dbReference>
<dbReference type="RefSeq" id="WP_007690757.1">
    <property type="nucleotide sequence ID" value="NC_011985.1"/>
</dbReference>
<dbReference type="SMR" id="B9JDT2"/>
<dbReference type="STRING" id="311403.Arad_1977"/>
<dbReference type="GeneID" id="86848171"/>
<dbReference type="KEGG" id="ara:Arad_1977"/>
<dbReference type="eggNOG" id="COG0185">
    <property type="taxonomic scope" value="Bacteria"/>
</dbReference>
<dbReference type="HOGENOM" id="CLU_144911_0_1_5"/>
<dbReference type="Proteomes" id="UP000001600">
    <property type="component" value="Chromosome 1"/>
</dbReference>
<dbReference type="GO" id="GO:0005737">
    <property type="term" value="C:cytoplasm"/>
    <property type="evidence" value="ECO:0007669"/>
    <property type="project" value="UniProtKB-ARBA"/>
</dbReference>
<dbReference type="GO" id="GO:0015935">
    <property type="term" value="C:small ribosomal subunit"/>
    <property type="evidence" value="ECO:0007669"/>
    <property type="project" value="InterPro"/>
</dbReference>
<dbReference type="GO" id="GO:0019843">
    <property type="term" value="F:rRNA binding"/>
    <property type="evidence" value="ECO:0007669"/>
    <property type="project" value="UniProtKB-UniRule"/>
</dbReference>
<dbReference type="GO" id="GO:0003735">
    <property type="term" value="F:structural constituent of ribosome"/>
    <property type="evidence" value="ECO:0007669"/>
    <property type="project" value="InterPro"/>
</dbReference>
<dbReference type="GO" id="GO:0000028">
    <property type="term" value="P:ribosomal small subunit assembly"/>
    <property type="evidence" value="ECO:0007669"/>
    <property type="project" value="TreeGrafter"/>
</dbReference>
<dbReference type="GO" id="GO:0006412">
    <property type="term" value="P:translation"/>
    <property type="evidence" value="ECO:0007669"/>
    <property type="project" value="UniProtKB-UniRule"/>
</dbReference>
<dbReference type="FunFam" id="3.30.860.10:FF:000001">
    <property type="entry name" value="30S ribosomal protein S19"/>
    <property type="match status" value="1"/>
</dbReference>
<dbReference type="Gene3D" id="3.30.860.10">
    <property type="entry name" value="30s Ribosomal Protein S19, Chain A"/>
    <property type="match status" value="1"/>
</dbReference>
<dbReference type="HAMAP" id="MF_00531">
    <property type="entry name" value="Ribosomal_uS19"/>
    <property type="match status" value="1"/>
</dbReference>
<dbReference type="InterPro" id="IPR002222">
    <property type="entry name" value="Ribosomal_uS19"/>
</dbReference>
<dbReference type="InterPro" id="IPR005732">
    <property type="entry name" value="Ribosomal_uS19_bac-type"/>
</dbReference>
<dbReference type="InterPro" id="IPR020934">
    <property type="entry name" value="Ribosomal_uS19_CS"/>
</dbReference>
<dbReference type="InterPro" id="IPR023575">
    <property type="entry name" value="Ribosomal_uS19_SF"/>
</dbReference>
<dbReference type="NCBIfam" id="TIGR01050">
    <property type="entry name" value="rpsS_bact"/>
    <property type="match status" value="1"/>
</dbReference>
<dbReference type="PANTHER" id="PTHR11880">
    <property type="entry name" value="RIBOSOMAL PROTEIN S19P FAMILY MEMBER"/>
    <property type="match status" value="1"/>
</dbReference>
<dbReference type="PANTHER" id="PTHR11880:SF8">
    <property type="entry name" value="SMALL RIBOSOMAL SUBUNIT PROTEIN US19M"/>
    <property type="match status" value="1"/>
</dbReference>
<dbReference type="Pfam" id="PF00203">
    <property type="entry name" value="Ribosomal_S19"/>
    <property type="match status" value="1"/>
</dbReference>
<dbReference type="PIRSF" id="PIRSF002144">
    <property type="entry name" value="Ribosomal_S19"/>
    <property type="match status" value="1"/>
</dbReference>
<dbReference type="PRINTS" id="PR00975">
    <property type="entry name" value="RIBOSOMALS19"/>
</dbReference>
<dbReference type="SUPFAM" id="SSF54570">
    <property type="entry name" value="Ribosomal protein S19"/>
    <property type="match status" value="1"/>
</dbReference>
<dbReference type="PROSITE" id="PS00323">
    <property type="entry name" value="RIBOSOMAL_S19"/>
    <property type="match status" value="1"/>
</dbReference>
<protein>
    <recommendedName>
        <fullName evidence="1">Small ribosomal subunit protein uS19</fullName>
    </recommendedName>
    <alternativeName>
        <fullName evidence="2">30S ribosomal protein S19</fullName>
    </alternativeName>
</protein>
<accession>B9JDT2</accession>
<organism>
    <name type="scientific">Rhizobium rhizogenes (strain K84 / ATCC BAA-868)</name>
    <name type="common">Agrobacterium radiobacter</name>
    <dbReference type="NCBI Taxonomy" id="311403"/>
    <lineage>
        <taxon>Bacteria</taxon>
        <taxon>Pseudomonadati</taxon>
        <taxon>Pseudomonadota</taxon>
        <taxon>Alphaproteobacteria</taxon>
        <taxon>Hyphomicrobiales</taxon>
        <taxon>Rhizobiaceae</taxon>
        <taxon>Rhizobium/Agrobacterium group</taxon>
        <taxon>Rhizobium</taxon>
    </lineage>
</organism>